<evidence type="ECO:0000250" key="1"/>
<evidence type="ECO:0000305" key="2"/>
<accession>P0C5D8</accession>
<accession>Q2GSA5</accession>
<reference key="1">
    <citation type="journal article" date="2015" name="Genome Announc.">
        <title>Draft genome sequence of the cellulolytic fungus Chaetomium globosum.</title>
        <authorList>
            <person name="Cuomo C.A."/>
            <person name="Untereiner W.A."/>
            <person name="Ma L.-J."/>
            <person name="Grabherr M."/>
            <person name="Birren B.W."/>
        </authorList>
    </citation>
    <scope>NUCLEOTIDE SEQUENCE [LARGE SCALE GENOMIC DNA]</scope>
    <source>
        <strain>ATCC 6205 / CBS 148.51 / DSM 1962 / NBRC 6347 / NRRL 1970</strain>
    </source>
</reference>
<proteinExistence type="inferred from homology"/>
<sequence length="233" mass="24512">MASNLVLGSTGVIGSGILATLLADSSISAVHTISRRAPKSTGPTLHATIEADTTQWGAKLAGIKPTPSTVYSGLGTTRQQAGGIANQWKIDHDLNVELAQAAKKAGVHSFVFISSAGSGGLLANYLPYSKMKKGVEETIKGLDFEQAIIVRPAIILAEREVPHQGAPLLIGATRALGRWFGLGLQDKLGQEGEVIARAAVHAAKIAAEGKAPSKYWVLESSDIVRLGRTEWKD</sequence>
<comment type="subcellular location">
    <subcellularLocation>
        <location evidence="1">Mitochondrion outer membrane</location>
        <topology evidence="1">Peripheral membrane protein</topology>
    </subcellularLocation>
</comment>
<comment type="similarity">
    <text evidence="2">Belongs to the FMP52 family.</text>
</comment>
<comment type="sequence caution" evidence="2">
    <conflict type="erroneous gene model prediction">
        <sequence resource="EMBL-CDS" id="EAQ85135"/>
    </conflict>
    <text>The predicted gene CHGG_09149 has been split into 2 genes: CHGG_09149.1 and CHGG_09149.2.</text>
</comment>
<dbReference type="EMBL" id="CH408034">
    <property type="protein sequence ID" value="EAQ85135.1"/>
    <property type="status" value="ALT_SEQ"/>
    <property type="molecule type" value="Genomic_DNA"/>
</dbReference>
<dbReference type="SMR" id="P0C5D8"/>
<dbReference type="FunCoup" id="P0C5D8">
    <property type="interactions" value="85"/>
</dbReference>
<dbReference type="STRING" id="306901.P0C5D8"/>
<dbReference type="VEuPathDB" id="FungiDB:CHGG_09149"/>
<dbReference type="HOGENOM" id="CLU_599913_0_0_1"/>
<dbReference type="InParanoid" id="P0C5D8"/>
<dbReference type="Proteomes" id="UP000001056">
    <property type="component" value="Unassembled WGS sequence"/>
</dbReference>
<dbReference type="GO" id="GO:0005741">
    <property type="term" value="C:mitochondrial outer membrane"/>
    <property type="evidence" value="ECO:0007669"/>
    <property type="project" value="UniProtKB-SubCell"/>
</dbReference>
<dbReference type="GO" id="GO:0051170">
    <property type="term" value="P:import into nucleus"/>
    <property type="evidence" value="ECO:0007669"/>
    <property type="project" value="TreeGrafter"/>
</dbReference>
<dbReference type="FunFam" id="3.40.50.720:FF:000366">
    <property type="entry name" value="Protein FMP52, mitochondrial"/>
    <property type="match status" value="1"/>
</dbReference>
<dbReference type="Gene3D" id="3.40.50.720">
    <property type="entry name" value="NAD(P)-binding Rossmann-like Domain"/>
    <property type="match status" value="1"/>
</dbReference>
<dbReference type="InterPro" id="IPR001509">
    <property type="entry name" value="Epimerase_deHydtase"/>
</dbReference>
<dbReference type="InterPro" id="IPR036291">
    <property type="entry name" value="NAD(P)-bd_dom_sf"/>
</dbReference>
<dbReference type="PANTHER" id="PTHR14097">
    <property type="entry name" value="OXIDOREDUCTASE HTATIP2"/>
    <property type="match status" value="1"/>
</dbReference>
<dbReference type="PANTHER" id="PTHR14097:SF7">
    <property type="entry name" value="OXIDOREDUCTASE HTATIP2"/>
    <property type="match status" value="1"/>
</dbReference>
<dbReference type="Pfam" id="PF01370">
    <property type="entry name" value="Epimerase"/>
    <property type="match status" value="1"/>
</dbReference>
<dbReference type="SUPFAM" id="SSF51735">
    <property type="entry name" value="NAD(P)-binding Rossmann-fold domains"/>
    <property type="match status" value="1"/>
</dbReference>
<protein>
    <recommendedName>
        <fullName>Protein FMP52, mitochondrial</fullName>
    </recommendedName>
</protein>
<keyword id="KW-0472">Membrane</keyword>
<keyword id="KW-0496">Mitochondrion</keyword>
<keyword id="KW-1000">Mitochondrion outer membrane</keyword>
<keyword id="KW-1185">Reference proteome</keyword>
<keyword id="KW-0809">Transit peptide</keyword>
<gene>
    <name type="primary">FMP52</name>
    <name type="ORF">CHGG_09149.1</name>
</gene>
<feature type="transit peptide" description="Mitochondrion">
    <location>
        <begin position="1"/>
        <end position="36"/>
    </location>
</feature>
<feature type="chain" id="PRO_0000301819" description="Protein FMP52, mitochondrial">
    <location>
        <begin position="37"/>
        <end position="233"/>
    </location>
</feature>
<organism>
    <name type="scientific">Chaetomium globosum (strain ATCC 6205 / CBS 148.51 / DSM 1962 / NBRC 6347 / NRRL 1970)</name>
    <name type="common">Soil fungus</name>
    <dbReference type="NCBI Taxonomy" id="306901"/>
    <lineage>
        <taxon>Eukaryota</taxon>
        <taxon>Fungi</taxon>
        <taxon>Dikarya</taxon>
        <taxon>Ascomycota</taxon>
        <taxon>Pezizomycotina</taxon>
        <taxon>Sordariomycetes</taxon>
        <taxon>Sordariomycetidae</taxon>
        <taxon>Sordariales</taxon>
        <taxon>Chaetomiaceae</taxon>
        <taxon>Chaetomium</taxon>
    </lineage>
</organism>
<name>FMP52_CHAGB</name>